<reference key="1">
    <citation type="journal article" date="2004" name="Proc. Natl. Acad. Sci. U.S.A.">
        <title>Genome sequence of the enterobacterial phytopathogen Erwinia carotovora subsp. atroseptica and characterization of virulence factors.</title>
        <authorList>
            <person name="Bell K.S."/>
            <person name="Sebaihia M."/>
            <person name="Pritchard L."/>
            <person name="Holden M.T.G."/>
            <person name="Hyman L.J."/>
            <person name="Holeva M.C."/>
            <person name="Thomson N.R."/>
            <person name="Bentley S.D."/>
            <person name="Churcher L.J.C."/>
            <person name="Mungall K."/>
            <person name="Atkin R."/>
            <person name="Bason N."/>
            <person name="Brooks K."/>
            <person name="Chillingworth T."/>
            <person name="Clark K."/>
            <person name="Doggett J."/>
            <person name="Fraser A."/>
            <person name="Hance Z."/>
            <person name="Hauser H."/>
            <person name="Jagels K."/>
            <person name="Moule S."/>
            <person name="Norbertczak H."/>
            <person name="Ormond D."/>
            <person name="Price C."/>
            <person name="Quail M.A."/>
            <person name="Sanders M."/>
            <person name="Walker D."/>
            <person name="Whitehead S."/>
            <person name="Salmond G.P.C."/>
            <person name="Birch P.R.J."/>
            <person name="Parkhill J."/>
            <person name="Toth I.K."/>
        </authorList>
    </citation>
    <scope>NUCLEOTIDE SEQUENCE [LARGE SCALE GENOMIC DNA]</scope>
    <source>
        <strain>SCRI 1043 / ATCC BAA-672</strain>
    </source>
</reference>
<keyword id="KW-0030">Aminoacyl-tRNA synthetase</keyword>
<keyword id="KW-0067">ATP-binding</keyword>
<keyword id="KW-0963">Cytoplasm</keyword>
<keyword id="KW-0436">Ligase</keyword>
<keyword id="KW-0547">Nucleotide-binding</keyword>
<keyword id="KW-0648">Protein biosynthesis</keyword>
<keyword id="KW-1185">Reference proteome</keyword>
<comment type="function">
    <text evidence="1">Catalyzes the attachment of serine to tRNA(Ser). Is also able to aminoacylate tRNA(Sec) with serine, to form the misacylated tRNA L-seryl-tRNA(Sec), which will be further converted into selenocysteinyl-tRNA(Sec).</text>
</comment>
<comment type="catalytic activity">
    <reaction evidence="1">
        <text>tRNA(Ser) + L-serine + ATP = L-seryl-tRNA(Ser) + AMP + diphosphate + H(+)</text>
        <dbReference type="Rhea" id="RHEA:12292"/>
        <dbReference type="Rhea" id="RHEA-COMP:9669"/>
        <dbReference type="Rhea" id="RHEA-COMP:9703"/>
        <dbReference type="ChEBI" id="CHEBI:15378"/>
        <dbReference type="ChEBI" id="CHEBI:30616"/>
        <dbReference type="ChEBI" id="CHEBI:33019"/>
        <dbReference type="ChEBI" id="CHEBI:33384"/>
        <dbReference type="ChEBI" id="CHEBI:78442"/>
        <dbReference type="ChEBI" id="CHEBI:78533"/>
        <dbReference type="ChEBI" id="CHEBI:456215"/>
        <dbReference type="EC" id="6.1.1.11"/>
    </reaction>
</comment>
<comment type="catalytic activity">
    <reaction evidence="1">
        <text>tRNA(Sec) + L-serine + ATP = L-seryl-tRNA(Sec) + AMP + diphosphate + H(+)</text>
        <dbReference type="Rhea" id="RHEA:42580"/>
        <dbReference type="Rhea" id="RHEA-COMP:9742"/>
        <dbReference type="Rhea" id="RHEA-COMP:10128"/>
        <dbReference type="ChEBI" id="CHEBI:15378"/>
        <dbReference type="ChEBI" id="CHEBI:30616"/>
        <dbReference type="ChEBI" id="CHEBI:33019"/>
        <dbReference type="ChEBI" id="CHEBI:33384"/>
        <dbReference type="ChEBI" id="CHEBI:78442"/>
        <dbReference type="ChEBI" id="CHEBI:78533"/>
        <dbReference type="ChEBI" id="CHEBI:456215"/>
        <dbReference type="EC" id="6.1.1.11"/>
    </reaction>
</comment>
<comment type="pathway">
    <text evidence="1">Aminoacyl-tRNA biosynthesis; selenocysteinyl-tRNA(Sec) biosynthesis; L-seryl-tRNA(Sec) from L-serine and tRNA(Sec): step 1/1.</text>
</comment>
<comment type="subunit">
    <text evidence="1">Homodimer. The tRNA molecule binds across the dimer.</text>
</comment>
<comment type="subcellular location">
    <subcellularLocation>
        <location evidence="1">Cytoplasm</location>
    </subcellularLocation>
</comment>
<comment type="domain">
    <text evidence="1">Consists of two distinct domains, a catalytic core and a N-terminal extension that is involved in tRNA binding.</text>
</comment>
<comment type="similarity">
    <text evidence="1">Belongs to the class-II aminoacyl-tRNA synthetase family. Type-1 seryl-tRNA synthetase subfamily.</text>
</comment>
<proteinExistence type="inferred from homology"/>
<feature type="chain" id="PRO_0000122049" description="Serine--tRNA ligase">
    <location>
        <begin position="1"/>
        <end position="431"/>
    </location>
</feature>
<feature type="binding site" evidence="1">
    <location>
        <begin position="238"/>
        <end position="240"/>
    </location>
    <ligand>
        <name>L-serine</name>
        <dbReference type="ChEBI" id="CHEBI:33384"/>
    </ligand>
</feature>
<feature type="binding site" evidence="1">
    <location>
        <begin position="269"/>
        <end position="271"/>
    </location>
    <ligand>
        <name>ATP</name>
        <dbReference type="ChEBI" id="CHEBI:30616"/>
    </ligand>
</feature>
<feature type="binding site" evidence="1">
    <location>
        <position position="292"/>
    </location>
    <ligand>
        <name>L-serine</name>
        <dbReference type="ChEBI" id="CHEBI:33384"/>
    </ligand>
</feature>
<feature type="binding site" evidence="1">
    <location>
        <begin position="356"/>
        <end position="359"/>
    </location>
    <ligand>
        <name>ATP</name>
        <dbReference type="ChEBI" id="CHEBI:30616"/>
    </ligand>
</feature>
<feature type="binding site" evidence="1">
    <location>
        <position position="392"/>
    </location>
    <ligand>
        <name>L-serine</name>
        <dbReference type="ChEBI" id="CHEBI:33384"/>
    </ligand>
</feature>
<protein>
    <recommendedName>
        <fullName evidence="1">Serine--tRNA ligase</fullName>
        <ecNumber evidence="1">6.1.1.11</ecNumber>
    </recommendedName>
    <alternativeName>
        <fullName evidence="1">Seryl-tRNA synthetase</fullName>
        <shortName evidence="1">SerRS</shortName>
    </alternativeName>
    <alternativeName>
        <fullName evidence="1">Seryl-tRNA(Ser/Sec) synthetase</fullName>
    </alternativeName>
</protein>
<gene>
    <name evidence="1" type="primary">serS</name>
    <name type="ordered locus">ECA2644</name>
</gene>
<dbReference type="EC" id="6.1.1.11" evidence="1"/>
<dbReference type="EMBL" id="BX950851">
    <property type="protein sequence ID" value="CAG75544.1"/>
    <property type="molecule type" value="Genomic_DNA"/>
</dbReference>
<dbReference type="RefSeq" id="WP_011094188.1">
    <property type="nucleotide sequence ID" value="NC_004547.2"/>
</dbReference>
<dbReference type="SMR" id="Q6D3V0"/>
<dbReference type="STRING" id="218491.ECA2644"/>
<dbReference type="GeneID" id="57208663"/>
<dbReference type="KEGG" id="eca:ECA2644"/>
<dbReference type="PATRIC" id="fig|218491.5.peg.2678"/>
<dbReference type="eggNOG" id="COG0172">
    <property type="taxonomic scope" value="Bacteria"/>
</dbReference>
<dbReference type="HOGENOM" id="CLU_023797_1_1_6"/>
<dbReference type="OrthoDB" id="9804647at2"/>
<dbReference type="UniPathway" id="UPA00906">
    <property type="reaction ID" value="UER00895"/>
</dbReference>
<dbReference type="Proteomes" id="UP000007966">
    <property type="component" value="Chromosome"/>
</dbReference>
<dbReference type="GO" id="GO:0005737">
    <property type="term" value="C:cytoplasm"/>
    <property type="evidence" value="ECO:0007669"/>
    <property type="project" value="UniProtKB-SubCell"/>
</dbReference>
<dbReference type="GO" id="GO:0005524">
    <property type="term" value="F:ATP binding"/>
    <property type="evidence" value="ECO:0007669"/>
    <property type="project" value="UniProtKB-UniRule"/>
</dbReference>
<dbReference type="GO" id="GO:0004828">
    <property type="term" value="F:serine-tRNA ligase activity"/>
    <property type="evidence" value="ECO:0007669"/>
    <property type="project" value="UniProtKB-UniRule"/>
</dbReference>
<dbReference type="GO" id="GO:0016260">
    <property type="term" value="P:selenocysteine biosynthetic process"/>
    <property type="evidence" value="ECO:0007669"/>
    <property type="project" value="UniProtKB-UniRule"/>
</dbReference>
<dbReference type="GO" id="GO:0006434">
    <property type="term" value="P:seryl-tRNA aminoacylation"/>
    <property type="evidence" value="ECO:0007669"/>
    <property type="project" value="UniProtKB-UniRule"/>
</dbReference>
<dbReference type="CDD" id="cd00770">
    <property type="entry name" value="SerRS_core"/>
    <property type="match status" value="1"/>
</dbReference>
<dbReference type="FunFam" id="1.10.287.40:FF:000001">
    <property type="entry name" value="Serine--tRNA ligase"/>
    <property type="match status" value="1"/>
</dbReference>
<dbReference type="FunFam" id="3.30.930.10:FF:000018">
    <property type="entry name" value="Serine--tRNA ligase"/>
    <property type="match status" value="1"/>
</dbReference>
<dbReference type="Gene3D" id="3.30.930.10">
    <property type="entry name" value="Bira Bifunctional Protein, Domain 2"/>
    <property type="match status" value="1"/>
</dbReference>
<dbReference type="Gene3D" id="1.10.287.40">
    <property type="entry name" value="Serine-tRNA synthetase, tRNA binding domain"/>
    <property type="match status" value="1"/>
</dbReference>
<dbReference type="HAMAP" id="MF_00176">
    <property type="entry name" value="Ser_tRNA_synth_type1"/>
    <property type="match status" value="1"/>
</dbReference>
<dbReference type="InterPro" id="IPR002314">
    <property type="entry name" value="aa-tRNA-synt_IIb"/>
</dbReference>
<dbReference type="InterPro" id="IPR006195">
    <property type="entry name" value="aa-tRNA-synth_II"/>
</dbReference>
<dbReference type="InterPro" id="IPR045864">
    <property type="entry name" value="aa-tRNA-synth_II/BPL/LPL"/>
</dbReference>
<dbReference type="InterPro" id="IPR002317">
    <property type="entry name" value="Ser-tRNA-ligase_type_1"/>
</dbReference>
<dbReference type="InterPro" id="IPR015866">
    <property type="entry name" value="Ser-tRNA-synth_1_N"/>
</dbReference>
<dbReference type="InterPro" id="IPR042103">
    <property type="entry name" value="SerRS_1_N_sf"/>
</dbReference>
<dbReference type="InterPro" id="IPR033729">
    <property type="entry name" value="SerRS_core"/>
</dbReference>
<dbReference type="InterPro" id="IPR010978">
    <property type="entry name" value="tRNA-bd_arm"/>
</dbReference>
<dbReference type="NCBIfam" id="TIGR00414">
    <property type="entry name" value="serS"/>
    <property type="match status" value="1"/>
</dbReference>
<dbReference type="PANTHER" id="PTHR43697:SF1">
    <property type="entry name" value="SERINE--TRNA LIGASE"/>
    <property type="match status" value="1"/>
</dbReference>
<dbReference type="PANTHER" id="PTHR43697">
    <property type="entry name" value="SERYL-TRNA SYNTHETASE"/>
    <property type="match status" value="1"/>
</dbReference>
<dbReference type="Pfam" id="PF02403">
    <property type="entry name" value="Seryl_tRNA_N"/>
    <property type="match status" value="1"/>
</dbReference>
<dbReference type="Pfam" id="PF00587">
    <property type="entry name" value="tRNA-synt_2b"/>
    <property type="match status" value="1"/>
</dbReference>
<dbReference type="PIRSF" id="PIRSF001529">
    <property type="entry name" value="Ser-tRNA-synth_IIa"/>
    <property type="match status" value="1"/>
</dbReference>
<dbReference type="PRINTS" id="PR00981">
    <property type="entry name" value="TRNASYNTHSER"/>
</dbReference>
<dbReference type="SUPFAM" id="SSF55681">
    <property type="entry name" value="Class II aaRS and biotin synthetases"/>
    <property type="match status" value="1"/>
</dbReference>
<dbReference type="SUPFAM" id="SSF46589">
    <property type="entry name" value="tRNA-binding arm"/>
    <property type="match status" value="1"/>
</dbReference>
<dbReference type="PROSITE" id="PS50862">
    <property type="entry name" value="AA_TRNA_LIGASE_II"/>
    <property type="match status" value="1"/>
</dbReference>
<accession>Q6D3V0</accession>
<sequence length="431" mass="48776">MLDPNLLRNELDAVAEKLLARRGFKLDVETLRKQEERRKVLQVETESLQAERNSRSKEIGAAKARGEDIEPLRREVNTLGEKLDTAKAELDQLQNEIRDLALTIPNLPDDSVPLGKDESQNKEVTRWGEPRKYDFAVRDHVELGEMAGGLDFAAAVKLTGARFVVMKGQIARLHRALAQFMLDLHTQQHGYQEAYVPYLVNHATLYGTGQLPKFGEDLFHTNPLSEEAESSQYALIPTAEVPLTNLVRDEILDEESLPLKMTAHTPCFRSEAGSYGRDTRGLIRMHQFDKVELVQIVRPEDSMQALEELTTHAETVLQLLKLPYRKVLLCTGDMGFGSTKTYDLEVWLPAQDTYREISSCSNMWDFQARRMQARCRSKSDKKTRLVHTLNGSGLAVGRTLVAVLENYQQADGRIEIPEVLRPYMGGLEFIG</sequence>
<evidence type="ECO:0000255" key="1">
    <source>
        <dbReference type="HAMAP-Rule" id="MF_00176"/>
    </source>
</evidence>
<name>SYS_PECAS</name>
<organism>
    <name type="scientific">Pectobacterium atrosepticum (strain SCRI 1043 / ATCC BAA-672)</name>
    <name type="common">Erwinia carotovora subsp. atroseptica</name>
    <dbReference type="NCBI Taxonomy" id="218491"/>
    <lineage>
        <taxon>Bacteria</taxon>
        <taxon>Pseudomonadati</taxon>
        <taxon>Pseudomonadota</taxon>
        <taxon>Gammaproteobacteria</taxon>
        <taxon>Enterobacterales</taxon>
        <taxon>Pectobacteriaceae</taxon>
        <taxon>Pectobacterium</taxon>
    </lineage>
</organism>